<dbReference type="EC" id="2.7.1.33" evidence="1"/>
<dbReference type="EMBL" id="CP000854">
    <property type="protein sequence ID" value="ACC42783.1"/>
    <property type="molecule type" value="Genomic_DNA"/>
</dbReference>
<dbReference type="RefSeq" id="WP_011738565.1">
    <property type="nucleotide sequence ID" value="NC_010612.1"/>
</dbReference>
<dbReference type="SMR" id="B2HT62"/>
<dbReference type="STRING" id="216594.MMAR_4376"/>
<dbReference type="GeneID" id="34341016"/>
<dbReference type="KEGG" id="mmi:MMAR_4376"/>
<dbReference type="eggNOG" id="COG0572">
    <property type="taxonomic scope" value="Bacteria"/>
</dbReference>
<dbReference type="HOGENOM" id="CLU_053818_1_1_11"/>
<dbReference type="OrthoDB" id="1550976at2"/>
<dbReference type="UniPathway" id="UPA00241">
    <property type="reaction ID" value="UER00352"/>
</dbReference>
<dbReference type="Proteomes" id="UP000001190">
    <property type="component" value="Chromosome"/>
</dbReference>
<dbReference type="GO" id="GO:0005737">
    <property type="term" value="C:cytoplasm"/>
    <property type="evidence" value="ECO:0007669"/>
    <property type="project" value="UniProtKB-SubCell"/>
</dbReference>
<dbReference type="GO" id="GO:0005524">
    <property type="term" value="F:ATP binding"/>
    <property type="evidence" value="ECO:0007669"/>
    <property type="project" value="UniProtKB-UniRule"/>
</dbReference>
<dbReference type="GO" id="GO:0004594">
    <property type="term" value="F:pantothenate kinase activity"/>
    <property type="evidence" value="ECO:0007669"/>
    <property type="project" value="UniProtKB-UniRule"/>
</dbReference>
<dbReference type="GO" id="GO:0015937">
    <property type="term" value="P:coenzyme A biosynthetic process"/>
    <property type="evidence" value="ECO:0007669"/>
    <property type="project" value="UniProtKB-UniRule"/>
</dbReference>
<dbReference type="CDD" id="cd02025">
    <property type="entry name" value="PanK"/>
    <property type="match status" value="1"/>
</dbReference>
<dbReference type="FunFam" id="3.40.50.300:FF:000242">
    <property type="entry name" value="Pantothenate kinase"/>
    <property type="match status" value="1"/>
</dbReference>
<dbReference type="Gene3D" id="3.40.50.300">
    <property type="entry name" value="P-loop containing nucleotide triphosphate hydrolases"/>
    <property type="match status" value="1"/>
</dbReference>
<dbReference type="HAMAP" id="MF_00215">
    <property type="entry name" value="Pantothen_kinase_1"/>
    <property type="match status" value="1"/>
</dbReference>
<dbReference type="InterPro" id="IPR027417">
    <property type="entry name" value="P-loop_NTPase"/>
</dbReference>
<dbReference type="InterPro" id="IPR004566">
    <property type="entry name" value="PanK"/>
</dbReference>
<dbReference type="InterPro" id="IPR006083">
    <property type="entry name" value="PRK/URK"/>
</dbReference>
<dbReference type="NCBIfam" id="TIGR00554">
    <property type="entry name" value="panK_bact"/>
    <property type="match status" value="1"/>
</dbReference>
<dbReference type="PANTHER" id="PTHR10285">
    <property type="entry name" value="URIDINE KINASE"/>
    <property type="match status" value="1"/>
</dbReference>
<dbReference type="Pfam" id="PF00485">
    <property type="entry name" value="PRK"/>
    <property type="match status" value="1"/>
</dbReference>
<dbReference type="PIRSF" id="PIRSF000545">
    <property type="entry name" value="Pantothenate_kin"/>
    <property type="match status" value="1"/>
</dbReference>
<dbReference type="SUPFAM" id="SSF52540">
    <property type="entry name" value="P-loop containing nucleoside triphosphate hydrolases"/>
    <property type="match status" value="1"/>
</dbReference>
<accession>B2HT62</accession>
<reference key="1">
    <citation type="journal article" date="2008" name="Genome Res.">
        <title>Insights from the complete genome sequence of Mycobacterium marinum on the evolution of Mycobacterium tuberculosis.</title>
        <authorList>
            <person name="Stinear T.P."/>
            <person name="Seemann T."/>
            <person name="Harrison P.F."/>
            <person name="Jenkin G.A."/>
            <person name="Davies J.K."/>
            <person name="Johnson P.D."/>
            <person name="Abdellah Z."/>
            <person name="Arrowsmith C."/>
            <person name="Chillingworth T."/>
            <person name="Churcher C."/>
            <person name="Clarke K."/>
            <person name="Cronin A."/>
            <person name="Davis P."/>
            <person name="Goodhead I."/>
            <person name="Holroyd N."/>
            <person name="Jagels K."/>
            <person name="Lord A."/>
            <person name="Moule S."/>
            <person name="Mungall K."/>
            <person name="Norbertczak H."/>
            <person name="Quail M.A."/>
            <person name="Rabbinowitsch E."/>
            <person name="Walker D."/>
            <person name="White B."/>
            <person name="Whitehead S."/>
            <person name="Small P.L."/>
            <person name="Brosch R."/>
            <person name="Ramakrishnan L."/>
            <person name="Fischbach M.A."/>
            <person name="Parkhill J."/>
            <person name="Cole S.T."/>
        </authorList>
    </citation>
    <scope>NUCLEOTIDE SEQUENCE [LARGE SCALE GENOMIC DNA]</scope>
    <source>
        <strain>ATCC BAA-535 / M</strain>
    </source>
</reference>
<gene>
    <name evidence="1" type="primary">coaA</name>
    <name type="ordered locus">MMAR_4376</name>
</gene>
<proteinExistence type="inferred from homology"/>
<evidence type="ECO:0000255" key="1">
    <source>
        <dbReference type="HAMAP-Rule" id="MF_00215"/>
    </source>
</evidence>
<organism>
    <name type="scientific">Mycobacterium marinum (strain ATCC BAA-535 / M)</name>
    <dbReference type="NCBI Taxonomy" id="216594"/>
    <lineage>
        <taxon>Bacteria</taxon>
        <taxon>Bacillati</taxon>
        <taxon>Actinomycetota</taxon>
        <taxon>Actinomycetes</taxon>
        <taxon>Mycobacteriales</taxon>
        <taxon>Mycobacteriaceae</taxon>
        <taxon>Mycobacterium</taxon>
        <taxon>Mycobacterium ulcerans group</taxon>
    </lineage>
</organism>
<feature type="chain" id="PRO_1000099938" description="Pantothenate kinase">
    <location>
        <begin position="1"/>
        <end position="312"/>
    </location>
</feature>
<feature type="binding site" evidence="1">
    <location>
        <begin position="97"/>
        <end position="104"/>
    </location>
    <ligand>
        <name>ATP</name>
        <dbReference type="ChEBI" id="CHEBI:30616"/>
    </ligand>
</feature>
<keyword id="KW-0067">ATP-binding</keyword>
<keyword id="KW-0173">Coenzyme A biosynthesis</keyword>
<keyword id="KW-0963">Cytoplasm</keyword>
<keyword id="KW-0418">Kinase</keyword>
<keyword id="KW-0547">Nucleotide-binding</keyword>
<keyword id="KW-1185">Reference proteome</keyword>
<keyword id="KW-0808">Transferase</keyword>
<sequence>MSRLSEPSPYVEFDRRQWRALRMSTPLALTEAELIGLRGLGEQIDLLEVEEVFLPLARLLHLQVAARQRLFAATAEFLGEPQQNPDRPVPFIIGVAGSVAVGKSTTARVLQALLARWDHHPRVDLVTTDGFLYPNAELERRNLMHRKGFPESYNRRALMRFVTSVKSGSDYACAPVYSHLHYNIIPGAKQVVRHPDILILEGLNVLQTGPTLMVSDLFDFSLYVDARIEDIEQWYVSRFLAMRSTAFANPESHFHHYSALPDPEAVVAAREIWRTINRPNLVENILPTRPRATLVLRKDADHSIKRLRLRKL</sequence>
<name>COAA_MYCMM</name>
<comment type="catalytic activity">
    <reaction evidence="1">
        <text>(R)-pantothenate + ATP = (R)-4'-phosphopantothenate + ADP + H(+)</text>
        <dbReference type="Rhea" id="RHEA:16373"/>
        <dbReference type="ChEBI" id="CHEBI:10986"/>
        <dbReference type="ChEBI" id="CHEBI:15378"/>
        <dbReference type="ChEBI" id="CHEBI:29032"/>
        <dbReference type="ChEBI" id="CHEBI:30616"/>
        <dbReference type="ChEBI" id="CHEBI:456216"/>
        <dbReference type="EC" id="2.7.1.33"/>
    </reaction>
</comment>
<comment type="pathway">
    <text evidence="1">Cofactor biosynthesis; coenzyme A biosynthesis; CoA from (R)-pantothenate: step 1/5.</text>
</comment>
<comment type="subcellular location">
    <subcellularLocation>
        <location evidence="1">Cytoplasm</location>
    </subcellularLocation>
</comment>
<comment type="similarity">
    <text evidence="1">Belongs to the prokaryotic pantothenate kinase family.</text>
</comment>
<protein>
    <recommendedName>
        <fullName evidence="1">Pantothenate kinase</fullName>
        <ecNumber evidence="1">2.7.1.33</ecNumber>
    </recommendedName>
    <alternativeName>
        <fullName evidence="1">Pantothenic acid kinase</fullName>
    </alternativeName>
</protein>